<accession>A2CDE2</accession>
<gene>
    <name evidence="1" type="primary">eno</name>
    <name type="ordered locus">P9303_27721</name>
</gene>
<protein>
    <recommendedName>
        <fullName evidence="1">Enolase</fullName>
        <ecNumber evidence="1">4.2.1.11</ecNumber>
    </recommendedName>
    <alternativeName>
        <fullName evidence="1">2-phospho-D-glycerate hydro-lyase</fullName>
    </alternativeName>
    <alternativeName>
        <fullName evidence="1">2-phosphoglycerate dehydratase</fullName>
    </alternativeName>
</protein>
<comment type="function">
    <text evidence="1">Catalyzes the reversible conversion of 2-phosphoglycerate (2-PG) into phosphoenolpyruvate (PEP). It is essential for the degradation of carbohydrates via glycolysis.</text>
</comment>
<comment type="catalytic activity">
    <reaction evidence="1">
        <text>(2R)-2-phosphoglycerate = phosphoenolpyruvate + H2O</text>
        <dbReference type="Rhea" id="RHEA:10164"/>
        <dbReference type="ChEBI" id="CHEBI:15377"/>
        <dbReference type="ChEBI" id="CHEBI:58289"/>
        <dbReference type="ChEBI" id="CHEBI:58702"/>
        <dbReference type="EC" id="4.2.1.11"/>
    </reaction>
</comment>
<comment type="cofactor">
    <cofactor evidence="1">
        <name>Mg(2+)</name>
        <dbReference type="ChEBI" id="CHEBI:18420"/>
    </cofactor>
    <text evidence="1">Binds a second Mg(2+) ion via substrate during catalysis.</text>
</comment>
<comment type="pathway">
    <text evidence="1">Carbohydrate degradation; glycolysis; pyruvate from D-glyceraldehyde 3-phosphate: step 4/5.</text>
</comment>
<comment type="subcellular location">
    <subcellularLocation>
        <location evidence="1">Cytoplasm</location>
    </subcellularLocation>
    <subcellularLocation>
        <location evidence="1">Secreted</location>
    </subcellularLocation>
    <subcellularLocation>
        <location evidence="1">Cell surface</location>
    </subcellularLocation>
    <text evidence="1">Fractions of enolase are present in both the cytoplasm and on the cell surface.</text>
</comment>
<comment type="similarity">
    <text evidence="1">Belongs to the enolase family.</text>
</comment>
<sequence>MIDSLDLVIDTIVAREVLDSRGNPTVEAEVLLEAGAIGRAIVPSGASTGAHEAHELRDGDSRYMGKGVTKAVNHIEDRIAPALCGISSLDQASVDGTMQELDGSDNKSSLGANAILAVSMATARAAANGLGLPLYRYLGGPMASLLPVPLMNVINGGAHAANNLDFQEFMLVPHGASTFRESLRMGAEVFHTLKGLLSAQGLSTAVGDEGGFAPNLTNNDAAGDLLIQAIEKAGYSPGKDISLALDVASTEFYKDGCYAFGGGSYTSTEMVNELEKLVDRYPIISIEDGLAEDDWQGWALLTKKLGKRIQLIGDDIFVTSTKRLQQGIDQNVANSILIKVNQIGSLTETLQAIDLAGRSGYTSVISHRSGETEDTTIADLAVATRAGQIKTGSLSRSERVAKYNQLLRIEDELGTQALYAGATGQGPRGRS</sequence>
<reference key="1">
    <citation type="journal article" date="2007" name="PLoS Genet.">
        <title>Patterns and implications of gene gain and loss in the evolution of Prochlorococcus.</title>
        <authorList>
            <person name="Kettler G.C."/>
            <person name="Martiny A.C."/>
            <person name="Huang K."/>
            <person name="Zucker J."/>
            <person name="Coleman M.L."/>
            <person name="Rodrigue S."/>
            <person name="Chen F."/>
            <person name="Lapidus A."/>
            <person name="Ferriera S."/>
            <person name="Johnson J."/>
            <person name="Steglich C."/>
            <person name="Church G.M."/>
            <person name="Richardson P."/>
            <person name="Chisholm S.W."/>
        </authorList>
    </citation>
    <scope>NUCLEOTIDE SEQUENCE [LARGE SCALE GENOMIC DNA]</scope>
    <source>
        <strain>MIT 9303</strain>
    </source>
</reference>
<dbReference type="EC" id="4.2.1.11" evidence="1"/>
<dbReference type="EMBL" id="CP000554">
    <property type="protein sequence ID" value="ABM79502.1"/>
    <property type="molecule type" value="Genomic_DNA"/>
</dbReference>
<dbReference type="RefSeq" id="WP_011827345.1">
    <property type="nucleotide sequence ID" value="NC_008820.1"/>
</dbReference>
<dbReference type="SMR" id="A2CDE2"/>
<dbReference type="STRING" id="59922.P9303_27721"/>
<dbReference type="KEGG" id="pmf:P9303_27721"/>
<dbReference type="HOGENOM" id="CLU_031223_2_1_3"/>
<dbReference type="BioCyc" id="PMAR59922:G1G80-2431-MONOMER"/>
<dbReference type="UniPathway" id="UPA00109">
    <property type="reaction ID" value="UER00187"/>
</dbReference>
<dbReference type="Proteomes" id="UP000002274">
    <property type="component" value="Chromosome"/>
</dbReference>
<dbReference type="GO" id="GO:0009986">
    <property type="term" value="C:cell surface"/>
    <property type="evidence" value="ECO:0007669"/>
    <property type="project" value="UniProtKB-SubCell"/>
</dbReference>
<dbReference type="GO" id="GO:0005576">
    <property type="term" value="C:extracellular region"/>
    <property type="evidence" value="ECO:0007669"/>
    <property type="project" value="UniProtKB-SubCell"/>
</dbReference>
<dbReference type="GO" id="GO:0000015">
    <property type="term" value="C:phosphopyruvate hydratase complex"/>
    <property type="evidence" value="ECO:0007669"/>
    <property type="project" value="InterPro"/>
</dbReference>
<dbReference type="GO" id="GO:0000287">
    <property type="term" value="F:magnesium ion binding"/>
    <property type="evidence" value="ECO:0007669"/>
    <property type="project" value="UniProtKB-UniRule"/>
</dbReference>
<dbReference type="GO" id="GO:0004634">
    <property type="term" value="F:phosphopyruvate hydratase activity"/>
    <property type="evidence" value="ECO:0007669"/>
    <property type="project" value="UniProtKB-UniRule"/>
</dbReference>
<dbReference type="GO" id="GO:0006096">
    <property type="term" value="P:glycolytic process"/>
    <property type="evidence" value="ECO:0007669"/>
    <property type="project" value="UniProtKB-UniRule"/>
</dbReference>
<dbReference type="CDD" id="cd03313">
    <property type="entry name" value="enolase"/>
    <property type="match status" value="1"/>
</dbReference>
<dbReference type="FunFam" id="3.20.20.120:FF:000001">
    <property type="entry name" value="Enolase"/>
    <property type="match status" value="1"/>
</dbReference>
<dbReference type="FunFam" id="3.30.390.10:FF:000001">
    <property type="entry name" value="Enolase"/>
    <property type="match status" value="1"/>
</dbReference>
<dbReference type="Gene3D" id="3.20.20.120">
    <property type="entry name" value="Enolase-like C-terminal domain"/>
    <property type="match status" value="1"/>
</dbReference>
<dbReference type="Gene3D" id="3.30.390.10">
    <property type="entry name" value="Enolase-like, N-terminal domain"/>
    <property type="match status" value="1"/>
</dbReference>
<dbReference type="HAMAP" id="MF_00318">
    <property type="entry name" value="Enolase"/>
    <property type="match status" value="1"/>
</dbReference>
<dbReference type="InterPro" id="IPR000941">
    <property type="entry name" value="Enolase"/>
</dbReference>
<dbReference type="InterPro" id="IPR036849">
    <property type="entry name" value="Enolase-like_C_sf"/>
</dbReference>
<dbReference type="InterPro" id="IPR029017">
    <property type="entry name" value="Enolase-like_N"/>
</dbReference>
<dbReference type="InterPro" id="IPR020810">
    <property type="entry name" value="Enolase_C"/>
</dbReference>
<dbReference type="InterPro" id="IPR020809">
    <property type="entry name" value="Enolase_CS"/>
</dbReference>
<dbReference type="InterPro" id="IPR020811">
    <property type="entry name" value="Enolase_N"/>
</dbReference>
<dbReference type="NCBIfam" id="TIGR01060">
    <property type="entry name" value="eno"/>
    <property type="match status" value="1"/>
</dbReference>
<dbReference type="PANTHER" id="PTHR11902">
    <property type="entry name" value="ENOLASE"/>
    <property type="match status" value="1"/>
</dbReference>
<dbReference type="PANTHER" id="PTHR11902:SF1">
    <property type="entry name" value="ENOLASE"/>
    <property type="match status" value="1"/>
</dbReference>
<dbReference type="Pfam" id="PF00113">
    <property type="entry name" value="Enolase_C"/>
    <property type="match status" value="1"/>
</dbReference>
<dbReference type="Pfam" id="PF03952">
    <property type="entry name" value="Enolase_N"/>
    <property type="match status" value="1"/>
</dbReference>
<dbReference type="PIRSF" id="PIRSF001400">
    <property type="entry name" value="Enolase"/>
    <property type="match status" value="1"/>
</dbReference>
<dbReference type="PRINTS" id="PR00148">
    <property type="entry name" value="ENOLASE"/>
</dbReference>
<dbReference type="SFLD" id="SFLDF00002">
    <property type="entry name" value="enolase"/>
    <property type="match status" value="1"/>
</dbReference>
<dbReference type="SFLD" id="SFLDG00178">
    <property type="entry name" value="enolase"/>
    <property type="match status" value="1"/>
</dbReference>
<dbReference type="SMART" id="SM01192">
    <property type="entry name" value="Enolase_C"/>
    <property type="match status" value="1"/>
</dbReference>
<dbReference type="SMART" id="SM01193">
    <property type="entry name" value="Enolase_N"/>
    <property type="match status" value="1"/>
</dbReference>
<dbReference type="SUPFAM" id="SSF51604">
    <property type="entry name" value="Enolase C-terminal domain-like"/>
    <property type="match status" value="1"/>
</dbReference>
<dbReference type="SUPFAM" id="SSF54826">
    <property type="entry name" value="Enolase N-terminal domain-like"/>
    <property type="match status" value="1"/>
</dbReference>
<dbReference type="PROSITE" id="PS00164">
    <property type="entry name" value="ENOLASE"/>
    <property type="match status" value="1"/>
</dbReference>
<proteinExistence type="inferred from homology"/>
<evidence type="ECO:0000255" key="1">
    <source>
        <dbReference type="HAMAP-Rule" id="MF_00318"/>
    </source>
</evidence>
<feature type="chain" id="PRO_1000019235" description="Enolase">
    <location>
        <begin position="1"/>
        <end position="431"/>
    </location>
</feature>
<feature type="active site" description="Proton donor" evidence="1">
    <location>
        <position position="209"/>
    </location>
</feature>
<feature type="active site" description="Proton acceptor" evidence="1">
    <location>
        <position position="339"/>
    </location>
</feature>
<feature type="binding site" evidence="1">
    <location>
        <position position="167"/>
    </location>
    <ligand>
        <name>(2R)-2-phosphoglycerate</name>
        <dbReference type="ChEBI" id="CHEBI:58289"/>
    </ligand>
</feature>
<feature type="binding site" evidence="1">
    <location>
        <position position="246"/>
    </location>
    <ligand>
        <name>Mg(2+)</name>
        <dbReference type="ChEBI" id="CHEBI:18420"/>
    </ligand>
</feature>
<feature type="binding site" evidence="1">
    <location>
        <position position="287"/>
    </location>
    <ligand>
        <name>Mg(2+)</name>
        <dbReference type="ChEBI" id="CHEBI:18420"/>
    </ligand>
</feature>
<feature type="binding site" evidence="1">
    <location>
        <position position="314"/>
    </location>
    <ligand>
        <name>Mg(2+)</name>
        <dbReference type="ChEBI" id="CHEBI:18420"/>
    </ligand>
</feature>
<feature type="binding site" evidence="1">
    <location>
        <position position="339"/>
    </location>
    <ligand>
        <name>(2R)-2-phosphoglycerate</name>
        <dbReference type="ChEBI" id="CHEBI:58289"/>
    </ligand>
</feature>
<feature type="binding site" evidence="1">
    <location>
        <position position="368"/>
    </location>
    <ligand>
        <name>(2R)-2-phosphoglycerate</name>
        <dbReference type="ChEBI" id="CHEBI:58289"/>
    </ligand>
</feature>
<feature type="binding site" evidence="1">
    <location>
        <position position="369"/>
    </location>
    <ligand>
        <name>(2R)-2-phosphoglycerate</name>
        <dbReference type="ChEBI" id="CHEBI:58289"/>
    </ligand>
</feature>
<feature type="binding site" evidence="1">
    <location>
        <position position="390"/>
    </location>
    <ligand>
        <name>(2R)-2-phosphoglycerate</name>
        <dbReference type="ChEBI" id="CHEBI:58289"/>
    </ligand>
</feature>
<organism>
    <name type="scientific">Prochlorococcus marinus (strain MIT 9303)</name>
    <dbReference type="NCBI Taxonomy" id="59922"/>
    <lineage>
        <taxon>Bacteria</taxon>
        <taxon>Bacillati</taxon>
        <taxon>Cyanobacteriota</taxon>
        <taxon>Cyanophyceae</taxon>
        <taxon>Synechococcales</taxon>
        <taxon>Prochlorococcaceae</taxon>
        <taxon>Prochlorococcus</taxon>
    </lineage>
</organism>
<name>ENO_PROM3</name>
<keyword id="KW-0963">Cytoplasm</keyword>
<keyword id="KW-0324">Glycolysis</keyword>
<keyword id="KW-0456">Lyase</keyword>
<keyword id="KW-0460">Magnesium</keyword>
<keyword id="KW-0479">Metal-binding</keyword>
<keyword id="KW-0964">Secreted</keyword>